<dbReference type="EMBL" id="BA000012">
    <property type="protein sequence ID" value="BAB50810.1"/>
    <property type="molecule type" value="Genomic_DNA"/>
</dbReference>
<dbReference type="RefSeq" id="WP_010912153.1">
    <property type="nucleotide sequence ID" value="NC_002678.2"/>
</dbReference>
<dbReference type="SMR" id="Q98EV7"/>
<dbReference type="KEGG" id="mlo:mll4063"/>
<dbReference type="eggNOG" id="COG0224">
    <property type="taxonomic scope" value="Bacteria"/>
</dbReference>
<dbReference type="HOGENOM" id="CLU_050669_0_1_5"/>
<dbReference type="Proteomes" id="UP000000552">
    <property type="component" value="Chromosome"/>
</dbReference>
<dbReference type="GO" id="GO:0005886">
    <property type="term" value="C:plasma membrane"/>
    <property type="evidence" value="ECO:0007669"/>
    <property type="project" value="UniProtKB-SubCell"/>
</dbReference>
<dbReference type="GO" id="GO:0045259">
    <property type="term" value="C:proton-transporting ATP synthase complex"/>
    <property type="evidence" value="ECO:0007669"/>
    <property type="project" value="UniProtKB-KW"/>
</dbReference>
<dbReference type="GO" id="GO:0005524">
    <property type="term" value="F:ATP binding"/>
    <property type="evidence" value="ECO:0007669"/>
    <property type="project" value="UniProtKB-UniRule"/>
</dbReference>
<dbReference type="GO" id="GO:0046933">
    <property type="term" value="F:proton-transporting ATP synthase activity, rotational mechanism"/>
    <property type="evidence" value="ECO:0007669"/>
    <property type="project" value="UniProtKB-UniRule"/>
</dbReference>
<dbReference type="GO" id="GO:0042777">
    <property type="term" value="P:proton motive force-driven plasma membrane ATP synthesis"/>
    <property type="evidence" value="ECO:0007669"/>
    <property type="project" value="UniProtKB-UniRule"/>
</dbReference>
<dbReference type="CDD" id="cd12151">
    <property type="entry name" value="F1-ATPase_gamma"/>
    <property type="match status" value="1"/>
</dbReference>
<dbReference type="FunFam" id="1.10.287.80:FF:000001">
    <property type="entry name" value="ATP synthase gamma chain"/>
    <property type="match status" value="1"/>
</dbReference>
<dbReference type="FunFam" id="1.10.287.80:FF:000003">
    <property type="entry name" value="ATP synthase gamma chain, chloroplastic"/>
    <property type="match status" value="1"/>
</dbReference>
<dbReference type="Gene3D" id="3.40.1380.10">
    <property type="match status" value="1"/>
</dbReference>
<dbReference type="Gene3D" id="1.10.287.80">
    <property type="entry name" value="ATP synthase, gamma subunit, helix hairpin domain"/>
    <property type="match status" value="1"/>
</dbReference>
<dbReference type="HAMAP" id="MF_00815">
    <property type="entry name" value="ATP_synth_gamma_bact"/>
    <property type="match status" value="1"/>
</dbReference>
<dbReference type="InterPro" id="IPR035968">
    <property type="entry name" value="ATP_synth_F1_ATPase_gsu"/>
</dbReference>
<dbReference type="InterPro" id="IPR000131">
    <property type="entry name" value="ATP_synth_F1_gsu"/>
</dbReference>
<dbReference type="InterPro" id="IPR023632">
    <property type="entry name" value="ATP_synth_F1_gsu_CS"/>
</dbReference>
<dbReference type="NCBIfam" id="TIGR01146">
    <property type="entry name" value="ATPsyn_F1gamma"/>
    <property type="match status" value="1"/>
</dbReference>
<dbReference type="NCBIfam" id="NF004146">
    <property type="entry name" value="PRK05621.1-4"/>
    <property type="match status" value="1"/>
</dbReference>
<dbReference type="PANTHER" id="PTHR11693">
    <property type="entry name" value="ATP SYNTHASE GAMMA CHAIN"/>
    <property type="match status" value="1"/>
</dbReference>
<dbReference type="PANTHER" id="PTHR11693:SF22">
    <property type="entry name" value="ATP SYNTHASE SUBUNIT GAMMA, MITOCHONDRIAL"/>
    <property type="match status" value="1"/>
</dbReference>
<dbReference type="Pfam" id="PF00231">
    <property type="entry name" value="ATP-synt"/>
    <property type="match status" value="1"/>
</dbReference>
<dbReference type="PIRSF" id="PIRSF039089">
    <property type="entry name" value="ATP_synthase_gamma"/>
    <property type="match status" value="1"/>
</dbReference>
<dbReference type="PRINTS" id="PR00126">
    <property type="entry name" value="ATPASEGAMMA"/>
</dbReference>
<dbReference type="SUPFAM" id="SSF52943">
    <property type="entry name" value="ATP synthase (F1-ATPase), gamma subunit"/>
    <property type="match status" value="1"/>
</dbReference>
<dbReference type="PROSITE" id="PS00153">
    <property type="entry name" value="ATPASE_GAMMA"/>
    <property type="match status" value="1"/>
</dbReference>
<keyword id="KW-0066">ATP synthesis</keyword>
<keyword id="KW-0997">Cell inner membrane</keyword>
<keyword id="KW-1003">Cell membrane</keyword>
<keyword id="KW-0139">CF(1)</keyword>
<keyword id="KW-0375">Hydrogen ion transport</keyword>
<keyword id="KW-0406">Ion transport</keyword>
<keyword id="KW-0472">Membrane</keyword>
<keyword id="KW-0813">Transport</keyword>
<feature type="chain" id="PRO_0000073354" description="ATP synthase gamma chain">
    <location>
        <begin position="1"/>
        <end position="294"/>
    </location>
</feature>
<proteinExistence type="inferred from homology"/>
<protein>
    <recommendedName>
        <fullName evidence="1">ATP synthase gamma chain</fullName>
    </recommendedName>
    <alternativeName>
        <fullName evidence="1">ATP synthase F1 sector gamma subunit</fullName>
    </alternativeName>
    <alternativeName>
        <fullName evidence="1">F-ATPase gamma subunit</fullName>
    </alternativeName>
</protein>
<comment type="function">
    <text evidence="1">Produces ATP from ADP in the presence of a proton gradient across the membrane. The gamma chain is believed to be important in regulating ATPase activity and the flow of protons through the CF(0) complex.</text>
</comment>
<comment type="subunit">
    <text evidence="1">F-type ATPases have 2 components, CF(1) - the catalytic core - and CF(0) - the membrane proton channel. CF(1) has five subunits: alpha(3), beta(3), gamma(1), delta(1), epsilon(1). CF(0) has three main subunits: a, b and c.</text>
</comment>
<comment type="subcellular location">
    <subcellularLocation>
        <location evidence="1">Cell inner membrane</location>
        <topology evidence="1">Peripheral membrane protein</topology>
    </subcellularLocation>
</comment>
<comment type="similarity">
    <text evidence="1">Belongs to the ATPase gamma chain family.</text>
</comment>
<name>ATPG_RHILO</name>
<evidence type="ECO:0000255" key="1">
    <source>
        <dbReference type="HAMAP-Rule" id="MF_00815"/>
    </source>
</evidence>
<gene>
    <name evidence="1" type="primary">atpG</name>
    <name type="ordered locus">mll4063</name>
</gene>
<reference key="1">
    <citation type="journal article" date="2000" name="DNA Res.">
        <title>Complete genome structure of the nitrogen-fixing symbiotic bacterium Mesorhizobium loti.</title>
        <authorList>
            <person name="Kaneko T."/>
            <person name="Nakamura Y."/>
            <person name="Sato S."/>
            <person name="Asamizu E."/>
            <person name="Kato T."/>
            <person name="Sasamoto S."/>
            <person name="Watanabe A."/>
            <person name="Idesawa K."/>
            <person name="Ishikawa A."/>
            <person name="Kawashima K."/>
            <person name="Kimura T."/>
            <person name="Kishida Y."/>
            <person name="Kiyokawa C."/>
            <person name="Kohara M."/>
            <person name="Matsumoto M."/>
            <person name="Matsuno A."/>
            <person name="Mochizuki Y."/>
            <person name="Nakayama S."/>
            <person name="Nakazaki N."/>
            <person name="Shimpo S."/>
            <person name="Sugimoto M."/>
            <person name="Takeuchi C."/>
            <person name="Yamada M."/>
            <person name="Tabata S."/>
        </authorList>
    </citation>
    <scope>NUCLEOTIDE SEQUENCE [LARGE SCALE GENOMIC DNA]</scope>
    <source>
        <strain>LMG 29417 / CECT 9101 / MAFF 303099</strain>
    </source>
</reference>
<organism>
    <name type="scientific">Mesorhizobium japonicum (strain LMG 29417 / CECT 9101 / MAFF 303099)</name>
    <name type="common">Mesorhizobium loti (strain MAFF 303099)</name>
    <dbReference type="NCBI Taxonomy" id="266835"/>
    <lineage>
        <taxon>Bacteria</taxon>
        <taxon>Pseudomonadati</taxon>
        <taxon>Pseudomonadota</taxon>
        <taxon>Alphaproteobacteria</taxon>
        <taxon>Hyphomicrobiales</taxon>
        <taxon>Phyllobacteriaceae</taxon>
        <taxon>Mesorhizobium</taxon>
    </lineage>
</organism>
<sequence>MPSLKDLRNRIASVKATQKITKAMQMVAAAKLRRAQEAAEAARPYSERMGSVLANITQAIGGGGDAPALMTGTGKDNVHLLVVCTAERGLCGGFNSQIARLARDHIRRLLADGKQVKIICVGKKGFDILRRDYASMILDRVDLREVKTLGFVNADAIAKKVIHLFNEGAFDICTLFYSQFKSVISQVPTAQQIIPAGVASAPAAAVDGGNAVYEYEPEPGEILSDLIPRNISVQVFRALLENAAGEMGAKMSAMDNATRNAGEMINKLSITYNRQRQAQITKELIEIISGAEAL</sequence>
<accession>Q98EV7</accession>